<gene>
    <name type="ordered locus">SSU05_0416</name>
</gene>
<comment type="similarity">
    <text evidence="1">Belongs to the UPF0398 family.</text>
</comment>
<accession>A4VTE4</accession>
<organism>
    <name type="scientific">Streptococcus suis (strain 05ZYH33)</name>
    <dbReference type="NCBI Taxonomy" id="391295"/>
    <lineage>
        <taxon>Bacteria</taxon>
        <taxon>Bacillati</taxon>
        <taxon>Bacillota</taxon>
        <taxon>Bacilli</taxon>
        <taxon>Lactobacillales</taxon>
        <taxon>Streptococcaceae</taxon>
        <taxon>Streptococcus</taxon>
    </lineage>
</organism>
<reference key="1">
    <citation type="journal article" date="2007" name="PLoS ONE">
        <title>A glimpse of streptococcal toxic shock syndrome from comparative genomics of S. suis 2 Chinese isolates.</title>
        <authorList>
            <person name="Chen C."/>
            <person name="Tang J."/>
            <person name="Dong W."/>
            <person name="Wang C."/>
            <person name="Feng Y."/>
            <person name="Wang J."/>
            <person name="Zheng F."/>
            <person name="Pan X."/>
            <person name="Liu D."/>
            <person name="Li M."/>
            <person name="Song Y."/>
            <person name="Zhu X."/>
            <person name="Sun H."/>
            <person name="Feng T."/>
            <person name="Guo Z."/>
            <person name="Ju A."/>
            <person name="Ge J."/>
            <person name="Dong Y."/>
            <person name="Sun W."/>
            <person name="Jiang Y."/>
            <person name="Wang J."/>
            <person name="Yan J."/>
            <person name="Yang H."/>
            <person name="Wang X."/>
            <person name="Gao G.F."/>
            <person name="Yang R."/>
            <person name="Wang J."/>
            <person name="Yu J."/>
        </authorList>
    </citation>
    <scope>NUCLEOTIDE SEQUENCE [LARGE SCALE GENOMIC DNA]</scope>
    <source>
        <strain>05ZYH33</strain>
    </source>
</reference>
<dbReference type="EMBL" id="CP000407">
    <property type="protein sequence ID" value="ABP89383.1"/>
    <property type="molecule type" value="Genomic_DNA"/>
</dbReference>
<dbReference type="SMR" id="A4VTE4"/>
<dbReference type="STRING" id="391295.SSU05_0416"/>
<dbReference type="KEGG" id="ssu:SSU05_0416"/>
<dbReference type="eggNOG" id="COG4474">
    <property type="taxonomic scope" value="Bacteria"/>
</dbReference>
<dbReference type="HOGENOM" id="CLU_105319_0_0_9"/>
<dbReference type="BioCyc" id="SSUI391295:GHI8-452-MONOMER"/>
<dbReference type="Gene3D" id="3.40.50.450">
    <property type="match status" value="1"/>
</dbReference>
<dbReference type="HAMAP" id="MF_01575">
    <property type="entry name" value="UPF0398"/>
    <property type="match status" value="1"/>
</dbReference>
<dbReference type="InterPro" id="IPR010697">
    <property type="entry name" value="YspA"/>
</dbReference>
<dbReference type="NCBIfam" id="NF010181">
    <property type="entry name" value="PRK13660.1"/>
    <property type="match status" value="1"/>
</dbReference>
<dbReference type="PANTHER" id="PTHR38440:SF1">
    <property type="entry name" value="UPF0398 PROTEIN SPR0331"/>
    <property type="match status" value="1"/>
</dbReference>
<dbReference type="PANTHER" id="PTHR38440">
    <property type="entry name" value="UPF0398 PROTEIN YPSA"/>
    <property type="match status" value="1"/>
</dbReference>
<dbReference type="Pfam" id="PF06908">
    <property type="entry name" value="YpsA"/>
    <property type="match status" value="1"/>
</dbReference>
<dbReference type="PIRSF" id="PIRSF021290">
    <property type="entry name" value="DUF1273"/>
    <property type="match status" value="1"/>
</dbReference>
<dbReference type="SUPFAM" id="SSF102405">
    <property type="entry name" value="MCP/YpsA-like"/>
    <property type="match status" value="1"/>
</dbReference>
<protein>
    <recommendedName>
        <fullName evidence="1">UPF0398 protein SSU05_0416</fullName>
    </recommendedName>
</protein>
<evidence type="ECO:0000255" key="1">
    <source>
        <dbReference type="HAMAP-Rule" id="MF_01575"/>
    </source>
</evidence>
<name>Y416_STRSY</name>
<sequence>MDTKSLLVTGYRHTDLGIFSEKDPRLHIIKSAIRRNFIRFLEEGVSWFILTGQLGFEYWSLEVLEDLRAEGYQLSIATIFPFENHGEQWNEANQAKLARFKQVDFVKYAYPRYENPGQFRDYNQFLLDNTTGCYLFYDSENETNLKYLYHMVLKKEGYNRKTLTFEELNEEAENFSNSE</sequence>
<feature type="chain" id="PRO_0000318780" description="UPF0398 protein SSU05_0416">
    <location>
        <begin position="1"/>
        <end position="179"/>
    </location>
</feature>
<proteinExistence type="inferred from homology"/>